<feature type="initiator methionine" description="Removed" evidence="1">
    <location>
        <position position="1"/>
    </location>
</feature>
<feature type="chain" id="PRO_0000090464" description="Photosystem II protein D1" evidence="1">
    <location>
        <begin position="2"/>
        <end position="344"/>
    </location>
</feature>
<feature type="propeptide" id="PRO_0000316475" evidence="1">
    <location>
        <begin position="345"/>
        <end position="353"/>
    </location>
</feature>
<feature type="transmembrane region" description="Helical" evidence="1">
    <location>
        <begin position="29"/>
        <end position="46"/>
    </location>
</feature>
<feature type="transmembrane region" description="Helical" evidence="1">
    <location>
        <begin position="118"/>
        <end position="133"/>
    </location>
</feature>
<feature type="transmembrane region" description="Helical" evidence="1">
    <location>
        <begin position="142"/>
        <end position="156"/>
    </location>
</feature>
<feature type="transmembrane region" description="Helical" evidence="1">
    <location>
        <begin position="197"/>
        <end position="218"/>
    </location>
</feature>
<feature type="transmembrane region" description="Helical" evidence="1">
    <location>
        <begin position="274"/>
        <end position="288"/>
    </location>
</feature>
<feature type="binding site" description="axial binding residue" evidence="1">
    <location>
        <position position="118"/>
    </location>
    <ligand>
        <name>chlorophyll a</name>
        <dbReference type="ChEBI" id="CHEBI:58416"/>
        <label>ChlzD1</label>
    </ligand>
    <ligandPart>
        <name>Mg</name>
        <dbReference type="ChEBI" id="CHEBI:25107"/>
    </ligandPart>
</feature>
<feature type="binding site" evidence="1">
    <location>
        <position position="126"/>
    </location>
    <ligand>
        <name>pheophytin a</name>
        <dbReference type="ChEBI" id="CHEBI:136840"/>
        <label>D1</label>
    </ligand>
</feature>
<feature type="binding site" evidence="1">
    <location>
        <position position="170"/>
    </location>
    <ligand>
        <name>[CaMn4O5] cluster</name>
        <dbReference type="ChEBI" id="CHEBI:189552"/>
    </ligand>
</feature>
<feature type="binding site" evidence="1">
    <location>
        <position position="189"/>
    </location>
    <ligand>
        <name>[CaMn4O5] cluster</name>
        <dbReference type="ChEBI" id="CHEBI:189552"/>
    </ligand>
</feature>
<feature type="binding site" description="axial binding residue" evidence="1">
    <location>
        <position position="198"/>
    </location>
    <ligand>
        <name>chlorophyll a</name>
        <dbReference type="ChEBI" id="CHEBI:58416"/>
        <label>PD1</label>
    </ligand>
    <ligandPart>
        <name>Mg</name>
        <dbReference type="ChEBI" id="CHEBI:25107"/>
    </ligandPart>
</feature>
<feature type="binding site" evidence="1">
    <location>
        <position position="215"/>
    </location>
    <ligand>
        <name>a quinone</name>
        <dbReference type="ChEBI" id="CHEBI:132124"/>
        <label>B</label>
    </ligand>
</feature>
<feature type="binding site" evidence="1">
    <location>
        <position position="215"/>
    </location>
    <ligand>
        <name>Fe cation</name>
        <dbReference type="ChEBI" id="CHEBI:24875"/>
        <note>ligand shared with heterodimeric partner</note>
    </ligand>
</feature>
<feature type="binding site" evidence="1">
    <location>
        <begin position="264"/>
        <end position="265"/>
    </location>
    <ligand>
        <name>a quinone</name>
        <dbReference type="ChEBI" id="CHEBI:132124"/>
        <label>B</label>
    </ligand>
</feature>
<feature type="binding site" evidence="1">
    <location>
        <position position="272"/>
    </location>
    <ligand>
        <name>Fe cation</name>
        <dbReference type="ChEBI" id="CHEBI:24875"/>
        <note>ligand shared with heterodimeric partner</note>
    </ligand>
</feature>
<feature type="binding site" evidence="1">
    <location>
        <position position="332"/>
    </location>
    <ligand>
        <name>[CaMn4O5] cluster</name>
        <dbReference type="ChEBI" id="CHEBI:189552"/>
    </ligand>
</feature>
<feature type="binding site" evidence="1">
    <location>
        <position position="333"/>
    </location>
    <ligand>
        <name>[CaMn4O5] cluster</name>
        <dbReference type="ChEBI" id="CHEBI:189552"/>
    </ligand>
</feature>
<feature type="binding site" evidence="1">
    <location>
        <position position="342"/>
    </location>
    <ligand>
        <name>[CaMn4O5] cluster</name>
        <dbReference type="ChEBI" id="CHEBI:189552"/>
    </ligand>
</feature>
<feature type="binding site" evidence="1">
    <location>
        <position position="344"/>
    </location>
    <ligand>
        <name>[CaMn4O5] cluster</name>
        <dbReference type="ChEBI" id="CHEBI:189552"/>
    </ligand>
</feature>
<feature type="site" description="Tyrosine radical intermediate" evidence="1">
    <location>
        <position position="161"/>
    </location>
</feature>
<feature type="site" description="Stabilizes free radical intermediate" evidence="1">
    <location>
        <position position="190"/>
    </location>
</feature>
<feature type="site" description="Cleavage; by CTPA" evidence="1">
    <location>
        <begin position="344"/>
        <end position="345"/>
    </location>
</feature>
<feature type="modified residue" description="N-acetylthreonine" evidence="1">
    <location>
        <position position="2"/>
    </location>
</feature>
<feature type="modified residue" description="Phosphothreonine" evidence="1">
    <location>
        <position position="2"/>
    </location>
</feature>
<evidence type="ECO:0000255" key="1">
    <source>
        <dbReference type="HAMAP-Rule" id="MF_01379"/>
    </source>
</evidence>
<evidence type="ECO:0000305" key="2"/>
<gene>
    <name evidence="1 2" type="primary">psbA-A</name>
    <name type="synonym">psbA-I</name>
</gene>
<gene>
    <name evidence="1 2" type="primary">psbA-B</name>
    <name type="synonym">psbA-II</name>
</gene>
<name>PSBA_PINCO</name>
<proteinExistence type="inferred from homology"/>
<dbReference type="EC" id="1.10.3.9" evidence="1"/>
<dbReference type="EMBL" id="X53721">
    <property type="protein sequence ID" value="CAA37757.1"/>
    <property type="molecule type" value="Genomic_DNA"/>
</dbReference>
<dbReference type="EMBL" id="X53722">
    <property type="protein sequence ID" value="CAA37758.1"/>
    <property type="molecule type" value="Genomic_DNA"/>
</dbReference>
<dbReference type="EMBL" id="X57097">
    <property type="protein sequence ID" value="CAA40383.1"/>
    <property type="molecule type" value="Genomic_DNA"/>
</dbReference>
<dbReference type="EMBL" id="X57097">
    <property type="protein sequence ID" value="CAA40381.1"/>
    <property type="molecule type" value="Genomic_DNA"/>
</dbReference>
<dbReference type="PIR" id="S15957">
    <property type="entry name" value="S15957"/>
</dbReference>
<dbReference type="SMR" id="P69550"/>
<dbReference type="GO" id="GO:0009535">
    <property type="term" value="C:chloroplast thylakoid membrane"/>
    <property type="evidence" value="ECO:0007669"/>
    <property type="project" value="UniProtKB-SubCell"/>
</dbReference>
<dbReference type="GO" id="GO:0009523">
    <property type="term" value="C:photosystem II"/>
    <property type="evidence" value="ECO:0007669"/>
    <property type="project" value="UniProtKB-KW"/>
</dbReference>
<dbReference type="GO" id="GO:0016168">
    <property type="term" value="F:chlorophyll binding"/>
    <property type="evidence" value="ECO:0007669"/>
    <property type="project" value="UniProtKB-UniRule"/>
</dbReference>
<dbReference type="GO" id="GO:0045156">
    <property type="term" value="F:electron transporter, transferring electrons within the cyclic electron transport pathway of photosynthesis activity"/>
    <property type="evidence" value="ECO:0007669"/>
    <property type="project" value="InterPro"/>
</dbReference>
<dbReference type="GO" id="GO:0005506">
    <property type="term" value="F:iron ion binding"/>
    <property type="evidence" value="ECO:0007669"/>
    <property type="project" value="UniProtKB-UniRule"/>
</dbReference>
<dbReference type="GO" id="GO:0016682">
    <property type="term" value="F:oxidoreductase activity, acting on diphenols and related substances as donors, oxygen as acceptor"/>
    <property type="evidence" value="ECO:0007669"/>
    <property type="project" value="UniProtKB-UniRule"/>
</dbReference>
<dbReference type="GO" id="GO:0010242">
    <property type="term" value="F:oxygen evolving activity"/>
    <property type="evidence" value="ECO:0007669"/>
    <property type="project" value="UniProtKB-EC"/>
</dbReference>
<dbReference type="GO" id="GO:0009772">
    <property type="term" value="P:photosynthetic electron transport in photosystem II"/>
    <property type="evidence" value="ECO:0007669"/>
    <property type="project" value="InterPro"/>
</dbReference>
<dbReference type="GO" id="GO:0009635">
    <property type="term" value="P:response to herbicide"/>
    <property type="evidence" value="ECO:0007669"/>
    <property type="project" value="UniProtKB-KW"/>
</dbReference>
<dbReference type="CDD" id="cd09289">
    <property type="entry name" value="Photosystem-II_D1"/>
    <property type="match status" value="1"/>
</dbReference>
<dbReference type="FunFam" id="1.20.85.10:FF:000002">
    <property type="entry name" value="Photosystem II protein D1"/>
    <property type="match status" value="1"/>
</dbReference>
<dbReference type="Gene3D" id="1.20.85.10">
    <property type="entry name" value="Photosystem II protein D1-like"/>
    <property type="match status" value="1"/>
</dbReference>
<dbReference type="HAMAP" id="MF_01379">
    <property type="entry name" value="PSII_PsbA_D1"/>
    <property type="match status" value="1"/>
</dbReference>
<dbReference type="InterPro" id="IPR055266">
    <property type="entry name" value="D1/D2"/>
</dbReference>
<dbReference type="InterPro" id="IPR036854">
    <property type="entry name" value="Photo_II_D1/D2_sf"/>
</dbReference>
<dbReference type="InterPro" id="IPR000484">
    <property type="entry name" value="Photo_RC_L/M"/>
</dbReference>
<dbReference type="InterPro" id="IPR055265">
    <property type="entry name" value="Photo_RC_L/M_CS"/>
</dbReference>
<dbReference type="InterPro" id="IPR005867">
    <property type="entry name" value="PSII_D1"/>
</dbReference>
<dbReference type="NCBIfam" id="TIGR01151">
    <property type="entry name" value="psbA"/>
    <property type="match status" value="1"/>
</dbReference>
<dbReference type="PANTHER" id="PTHR33149:SF12">
    <property type="entry name" value="PHOTOSYSTEM II D2 PROTEIN"/>
    <property type="match status" value="1"/>
</dbReference>
<dbReference type="PANTHER" id="PTHR33149">
    <property type="entry name" value="PHOTOSYSTEM II PROTEIN D1"/>
    <property type="match status" value="1"/>
</dbReference>
<dbReference type="Pfam" id="PF00124">
    <property type="entry name" value="Photo_RC"/>
    <property type="match status" value="1"/>
</dbReference>
<dbReference type="PRINTS" id="PR00256">
    <property type="entry name" value="REACTNCENTRE"/>
</dbReference>
<dbReference type="SUPFAM" id="SSF81483">
    <property type="entry name" value="Bacterial photosystem II reaction centre, L and M subunits"/>
    <property type="match status" value="1"/>
</dbReference>
<dbReference type="PROSITE" id="PS00244">
    <property type="entry name" value="REACTION_CENTER"/>
    <property type="match status" value="1"/>
</dbReference>
<sequence>MTAIIERRESANLWSRFCDWITSTENRLYIGWFGVLMIPTLLTATSVFIIAFIAAPPVDIDGIREPVSGSLLYGNNIISGAIIPTSAAIGLHFYPIWEAASVDEWLYNGGPYELIVLHFLLGVACYMGREWELSFRLGMRPWIAVAYSAPVAAATAVFLIYPIGQGSFSDGMPLGISGTFNFMIVFQAEHNILMHPFHMLGVAGVFGGSLFSAMHGSLVTSSLIRETTENQSANAGYKFGQEEETYNIVAAHGYFGRLIFQYASFNNSRSLHFFLAAWPVAGIWFTALGISTMAFNLNGFNFNQSVVDSQGRVINTWADIINRANLGMEVMHERNAHNFPLDLAAVESISIGG</sequence>
<accession>P69550</accession>
<accession>P24684</accession>
<comment type="function">
    <text evidence="1">Photosystem II (PSII) is a light-driven water:plastoquinone oxidoreductase that uses light energy to abstract electrons from H(2)O, generating O(2) and a proton gradient subsequently used for ATP formation. It consists of a core antenna complex that captures photons, and an electron transfer chain that converts photonic excitation into a charge separation. The D1/D2 (PsbA/PsbD) reaction center heterodimer binds P680, the primary electron donor of PSII as well as several subsequent electron acceptors.</text>
</comment>
<comment type="catalytic activity">
    <reaction evidence="1">
        <text>2 a plastoquinone + 4 hnu + 2 H2O = 2 a plastoquinol + O2</text>
        <dbReference type="Rhea" id="RHEA:36359"/>
        <dbReference type="Rhea" id="RHEA-COMP:9561"/>
        <dbReference type="Rhea" id="RHEA-COMP:9562"/>
        <dbReference type="ChEBI" id="CHEBI:15377"/>
        <dbReference type="ChEBI" id="CHEBI:15379"/>
        <dbReference type="ChEBI" id="CHEBI:17757"/>
        <dbReference type="ChEBI" id="CHEBI:30212"/>
        <dbReference type="ChEBI" id="CHEBI:62192"/>
        <dbReference type="EC" id="1.10.3.9"/>
    </reaction>
</comment>
<comment type="cofactor">
    <text evidence="1">The D1/D2 heterodimer binds P680, chlorophylls that are the primary electron donor of PSII, and subsequent electron acceptors. It shares a non-heme iron and each subunit binds pheophytin, quinone, additional chlorophylls, carotenoids and lipids. D1 provides most of the ligands for the Mn4-Ca-O5 cluster of the oxygen-evolving complex (OEC). There is also a Cl(-1) ion associated with D1 and D2, which is required for oxygen evolution. The PSII complex binds additional chlorophylls, carotenoids and specific lipids.</text>
</comment>
<comment type="subunit">
    <text evidence="1">PSII is composed of 1 copy each of membrane proteins PsbA, PsbB, PsbC, PsbD, PsbE, PsbF, PsbH, PsbI, PsbJ, PsbK, PsbL, PsbM, PsbT, PsbX, PsbY, PsbZ, Psb30/Ycf12, at least 3 peripheral proteins of the oxygen-evolving complex and a large number of cofactors. It forms dimeric complexes.</text>
</comment>
<comment type="subcellular location">
    <subcellularLocation>
        <location evidence="1">Plastid</location>
        <location evidence="1">Chloroplast thylakoid membrane</location>
        <topology evidence="1">Multi-pass membrane protein</topology>
    </subcellularLocation>
</comment>
<comment type="PTM">
    <text evidence="1">Tyr-161 forms a radical intermediate that is referred to as redox-active TyrZ, YZ or Y-Z.</text>
</comment>
<comment type="PTM">
    <text evidence="1">C-terminally processed by CTPA; processing is essential to allow assembly of the oxygen-evolving complex and thus photosynthetic growth.</text>
</comment>
<comment type="miscellaneous">
    <text evidence="1">2 of the reaction center chlorophylls (ChlD1 and ChlD2) are entirely coordinated by water.</text>
</comment>
<comment type="miscellaneous">
    <text evidence="1">Herbicides such as atrazine, BNT, diuron or ioxynil bind in the Q(B) binding site and block subsequent electron transfer.</text>
</comment>
<comment type="similarity">
    <text evidence="1">Belongs to the reaction center PufL/M/PsbA/D family.</text>
</comment>
<keyword id="KW-0007">Acetylation</keyword>
<keyword id="KW-0106">Calcium</keyword>
<keyword id="KW-0148">Chlorophyll</keyword>
<keyword id="KW-0150">Chloroplast</keyword>
<keyword id="KW-0157">Chromophore</keyword>
<keyword id="KW-0249">Electron transport</keyword>
<keyword id="KW-0359">Herbicide resistance</keyword>
<keyword id="KW-0408">Iron</keyword>
<keyword id="KW-0460">Magnesium</keyword>
<keyword id="KW-0464">Manganese</keyword>
<keyword id="KW-0472">Membrane</keyword>
<keyword id="KW-0479">Metal-binding</keyword>
<keyword id="KW-0560">Oxidoreductase</keyword>
<keyword id="KW-0597">Phosphoprotein</keyword>
<keyword id="KW-0602">Photosynthesis</keyword>
<keyword id="KW-0604">Photosystem II</keyword>
<keyword id="KW-0934">Plastid</keyword>
<keyword id="KW-0793">Thylakoid</keyword>
<keyword id="KW-0812">Transmembrane</keyword>
<keyword id="KW-1133">Transmembrane helix</keyword>
<keyword id="KW-0813">Transport</keyword>
<organism>
    <name type="scientific">Pinus contorta</name>
    <name type="common">Shore pine</name>
    <name type="synonym">Lodgepole pine</name>
    <dbReference type="NCBI Taxonomy" id="3339"/>
    <lineage>
        <taxon>Eukaryota</taxon>
        <taxon>Viridiplantae</taxon>
        <taxon>Streptophyta</taxon>
        <taxon>Embryophyta</taxon>
        <taxon>Tracheophyta</taxon>
        <taxon>Spermatophyta</taxon>
        <taxon>Pinopsida</taxon>
        <taxon>Pinidae</taxon>
        <taxon>Conifers I</taxon>
        <taxon>Pinales</taxon>
        <taxon>Pinaceae</taxon>
        <taxon>Pinus</taxon>
        <taxon>Pinus subgen. Pinus</taxon>
    </lineage>
</organism>
<reference key="1">
    <citation type="journal article" date="1991" name="Mol. Gen. Genet.">
        <title>Duplication of the psbA gene in the chloroplast genome of two Pinus species.</title>
        <authorList>
            <person name="Lidholm J.A."/>
            <person name="Szmidt A.E."/>
            <person name="Gustafsson P."/>
        </authorList>
    </citation>
    <scope>NUCLEOTIDE SEQUENCE [GENOMIC DNA]</scope>
    <source>
        <tissue>Leaf</tissue>
    </source>
</reference>
<reference key="2">
    <citation type="journal article" date="1991" name="Nucleic Acids Res.">
        <title>A three-step model for the rearrangement of the chloroplast trnK-psbA region of the gymnosperm Pinus contorta.</title>
        <authorList>
            <person name="Lidholm J.A."/>
            <person name="Gustafsson P."/>
        </authorList>
    </citation>
    <scope>NUCLEOTIDE SEQUENCE [GENOMIC DNA]</scope>
    <source>
        <tissue>Leaf</tissue>
    </source>
</reference>
<geneLocation type="chloroplast"/>
<protein>
    <recommendedName>
        <fullName evidence="1">Photosystem II protein D1</fullName>
        <shortName evidence="1">PSII D1 protein</shortName>
        <ecNumber evidence="1">1.10.3.9</ecNumber>
    </recommendedName>
    <alternativeName>
        <fullName evidence="1">Photosystem II Q(B) protein</fullName>
    </alternativeName>
</protein>